<dbReference type="EC" id="3.5.4.16" evidence="1"/>
<dbReference type="EMBL" id="FM242711">
    <property type="protein sequence ID" value="CAS05708.1"/>
    <property type="molecule type" value="Genomic_DNA"/>
</dbReference>
<dbReference type="RefSeq" id="WP_003727998.1">
    <property type="nucleotide sequence ID" value="NC_012488.1"/>
</dbReference>
<dbReference type="SMR" id="C1KWN3"/>
<dbReference type="KEGG" id="lmc:Lm4b_01950"/>
<dbReference type="HOGENOM" id="CLU_049768_3_3_9"/>
<dbReference type="UniPathway" id="UPA00848">
    <property type="reaction ID" value="UER00151"/>
</dbReference>
<dbReference type="GO" id="GO:0005737">
    <property type="term" value="C:cytoplasm"/>
    <property type="evidence" value="ECO:0007669"/>
    <property type="project" value="TreeGrafter"/>
</dbReference>
<dbReference type="GO" id="GO:0005525">
    <property type="term" value="F:GTP binding"/>
    <property type="evidence" value="ECO:0007669"/>
    <property type="project" value="UniProtKB-KW"/>
</dbReference>
<dbReference type="GO" id="GO:0003934">
    <property type="term" value="F:GTP cyclohydrolase I activity"/>
    <property type="evidence" value="ECO:0007669"/>
    <property type="project" value="UniProtKB-UniRule"/>
</dbReference>
<dbReference type="GO" id="GO:0008270">
    <property type="term" value="F:zinc ion binding"/>
    <property type="evidence" value="ECO:0007669"/>
    <property type="project" value="UniProtKB-UniRule"/>
</dbReference>
<dbReference type="GO" id="GO:0006730">
    <property type="term" value="P:one-carbon metabolic process"/>
    <property type="evidence" value="ECO:0007669"/>
    <property type="project" value="UniProtKB-UniRule"/>
</dbReference>
<dbReference type="GO" id="GO:0006729">
    <property type="term" value="P:tetrahydrobiopterin biosynthetic process"/>
    <property type="evidence" value="ECO:0007669"/>
    <property type="project" value="TreeGrafter"/>
</dbReference>
<dbReference type="GO" id="GO:0046654">
    <property type="term" value="P:tetrahydrofolate biosynthetic process"/>
    <property type="evidence" value="ECO:0007669"/>
    <property type="project" value="UniProtKB-UniRule"/>
</dbReference>
<dbReference type="FunFam" id="1.10.286.10:FF:000001">
    <property type="entry name" value="GTP cyclohydrolase 1"/>
    <property type="match status" value="1"/>
</dbReference>
<dbReference type="FunFam" id="3.30.1130.10:FF:000001">
    <property type="entry name" value="GTP cyclohydrolase 1"/>
    <property type="match status" value="1"/>
</dbReference>
<dbReference type="Gene3D" id="1.10.286.10">
    <property type="match status" value="1"/>
</dbReference>
<dbReference type="Gene3D" id="3.30.1130.10">
    <property type="match status" value="1"/>
</dbReference>
<dbReference type="HAMAP" id="MF_00223">
    <property type="entry name" value="FolE"/>
    <property type="match status" value="1"/>
</dbReference>
<dbReference type="InterPro" id="IPR043133">
    <property type="entry name" value="GTP-CH-I_C/QueF"/>
</dbReference>
<dbReference type="InterPro" id="IPR043134">
    <property type="entry name" value="GTP-CH-I_N"/>
</dbReference>
<dbReference type="InterPro" id="IPR001474">
    <property type="entry name" value="GTP_CycHdrlase_I"/>
</dbReference>
<dbReference type="InterPro" id="IPR018234">
    <property type="entry name" value="GTP_CycHdrlase_I_CS"/>
</dbReference>
<dbReference type="InterPro" id="IPR020602">
    <property type="entry name" value="GTP_CycHdrlase_I_dom"/>
</dbReference>
<dbReference type="NCBIfam" id="TIGR00063">
    <property type="entry name" value="folE"/>
    <property type="match status" value="1"/>
</dbReference>
<dbReference type="NCBIfam" id="NF006825">
    <property type="entry name" value="PRK09347.1-2"/>
    <property type="match status" value="1"/>
</dbReference>
<dbReference type="NCBIfam" id="NF006826">
    <property type="entry name" value="PRK09347.1-3"/>
    <property type="match status" value="1"/>
</dbReference>
<dbReference type="PANTHER" id="PTHR11109:SF7">
    <property type="entry name" value="GTP CYCLOHYDROLASE 1"/>
    <property type="match status" value="1"/>
</dbReference>
<dbReference type="PANTHER" id="PTHR11109">
    <property type="entry name" value="GTP CYCLOHYDROLASE I"/>
    <property type="match status" value="1"/>
</dbReference>
<dbReference type="Pfam" id="PF01227">
    <property type="entry name" value="GTP_cyclohydroI"/>
    <property type="match status" value="1"/>
</dbReference>
<dbReference type="SUPFAM" id="SSF55620">
    <property type="entry name" value="Tetrahydrobiopterin biosynthesis enzymes-like"/>
    <property type="match status" value="1"/>
</dbReference>
<dbReference type="PROSITE" id="PS00859">
    <property type="entry name" value="GTP_CYCLOHYDROL_1_1"/>
    <property type="match status" value="1"/>
</dbReference>
<dbReference type="PROSITE" id="PS00860">
    <property type="entry name" value="GTP_CYCLOHYDROL_1_2"/>
    <property type="match status" value="1"/>
</dbReference>
<organism>
    <name type="scientific">Listeria monocytogenes serotype 4b (strain CLIP80459)</name>
    <dbReference type="NCBI Taxonomy" id="568819"/>
    <lineage>
        <taxon>Bacteria</taxon>
        <taxon>Bacillati</taxon>
        <taxon>Bacillota</taxon>
        <taxon>Bacilli</taxon>
        <taxon>Bacillales</taxon>
        <taxon>Listeriaceae</taxon>
        <taxon>Listeria</taxon>
    </lineage>
</organism>
<gene>
    <name evidence="1" type="primary">folE</name>
    <name type="ordered locus">Lm4b_01950</name>
</gene>
<sequence>MEQIDKQKIADAVKVILEAVGENPEREGLIDTPMRVARMYEEVFAGLKKDPSVHFDTIFEEQHEELVLVKDIRFSSMCEHHLVPFFGVAHVAYLPQNGRVAGLSKLARVVDDVSRRPQLQERITTTVAEIMMEKLKPLGVMVIMEAEHMCMTIRGVNKPGTKTITSAVRGAFKNDDKLRSEVLALIKHN</sequence>
<proteinExistence type="inferred from homology"/>
<feature type="chain" id="PRO_1000204290" description="GTP cyclohydrolase 1">
    <location>
        <begin position="1"/>
        <end position="189"/>
    </location>
</feature>
<feature type="binding site" evidence="1">
    <location>
        <position position="78"/>
    </location>
    <ligand>
        <name>Zn(2+)</name>
        <dbReference type="ChEBI" id="CHEBI:29105"/>
    </ligand>
</feature>
<feature type="binding site" evidence="1">
    <location>
        <position position="81"/>
    </location>
    <ligand>
        <name>Zn(2+)</name>
        <dbReference type="ChEBI" id="CHEBI:29105"/>
    </ligand>
</feature>
<feature type="binding site" evidence="1">
    <location>
        <position position="150"/>
    </location>
    <ligand>
        <name>Zn(2+)</name>
        <dbReference type="ChEBI" id="CHEBI:29105"/>
    </ligand>
</feature>
<comment type="catalytic activity">
    <reaction evidence="1">
        <text>GTP + H2O = 7,8-dihydroneopterin 3'-triphosphate + formate + H(+)</text>
        <dbReference type="Rhea" id="RHEA:17473"/>
        <dbReference type="ChEBI" id="CHEBI:15377"/>
        <dbReference type="ChEBI" id="CHEBI:15378"/>
        <dbReference type="ChEBI" id="CHEBI:15740"/>
        <dbReference type="ChEBI" id="CHEBI:37565"/>
        <dbReference type="ChEBI" id="CHEBI:58462"/>
        <dbReference type="EC" id="3.5.4.16"/>
    </reaction>
</comment>
<comment type="pathway">
    <text evidence="1">Cofactor biosynthesis; 7,8-dihydroneopterin triphosphate biosynthesis; 7,8-dihydroneopterin triphosphate from GTP: step 1/1.</text>
</comment>
<comment type="subunit">
    <text evidence="1">Homomer.</text>
</comment>
<comment type="similarity">
    <text evidence="1">Belongs to the GTP cyclohydrolase I family.</text>
</comment>
<evidence type="ECO:0000255" key="1">
    <source>
        <dbReference type="HAMAP-Rule" id="MF_00223"/>
    </source>
</evidence>
<protein>
    <recommendedName>
        <fullName evidence="1">GTP cyclohydrolase 1</fullName>
        <ecNumber evidence="1">3.5.4.16</ecNumber>
    </recommendedName>
    <alternativeName>
        <fullName evidence="1">GTP cyclohydrolase I</fullName>
        <shortName evidence="1">GTP-CH-I</shortName>
    </alternativeName>
</protein>
<reference key="1">
    <citation type="journal article" date="2012" name="BMC Genomics">
        <title>Comparative genomics and transcriptomics of lineages I, II, and III strains of Listeria monocytogenes.</title>
        <authorList>
            <person name="Hain T."/>
            <person name="Ghai R."/>
            <person name="Billion A."/>
            <person name="Kuenne C.T."/>
            <person name="Steinweg C."/>
            <person name="Izar B."/>
            <person name="Mohamed W."/>
            <person name="Mraheil M."/>
            <person name="Domann E."/>
            <person name="Schaffrath S."/>
            <person name="Karst U."/>
            <person name="Goesmann A."/>
            <person name="Oehm S."/>
            <person name="Puhler A."/>
            <person name="Merkl R."/>
            <person name="Vorwerk S."/>
            <person name="Glaser P."/>
            <person name="Garrido P."/>
            <person name="Rusniok C."/>
            <person name="Buchrieser C."/>
            <person name="Goebel W."/>
            <person name="Chakraborty T."/>
        </authorList>
    </citation>
    <scope>NUCLEOTIDE SEQUENCE [LARGE SCALE GENOMIC DNA]</scope>
    <source>
        <strain>CLIP80459</strain>
    </source>
</reference>
<accession>C1KWN3</accession>
<name>GCH1_LISMC</name>
<keyword id="KW-0342">GTP-binding</keyword>
<keyword id="KW-0378">Hydrolase</keyword>
<keyword id="KW-0479">Metal-binding</keyword>
<keyword id="KW-0547">Nucleotide-binding</keyword>
<keyword id="KW-0554">One-carbon metabolism</keyword>
<keyword id="KW-0862">Zinc</keyword>